<keyword id="KW-0002">3D-structure</keyword>
<keyword id="KW-0010">Activator</keyword>
<keyword id="KW-0217">Developmental protein</keyword>
<keyword id="KW-0903">Direct protein sequencing</keyword>
<keyword id="KW-0238">DNA-binding</keyword>
<keyword id="KW-0325">Glycoprotein</keyword>
<keyword id="KW-0539">Nucleus</keyword>
<keyword id="KW-0597">Phosphoprotein</keyword>
<keyword id="KW-1267">Proteomics identification</keyword>
<keyword id="KW-1185">Reference proteome</keyword>
<keyword id="KW-0804">Transcription</keyword>
<keyword id="KW-0805">Transcription regulation</keyword>
<comment type="function">
    <text evidence="1">SRF is a transcription factor that binds to the serum response element (SRE), a short sequence of dyad symmetry located 300 bp to the 5' of the site of transcription initiation of some genes (such as FOS). Together with MRTFA transcription coactivator, controls expression of genes regulating the cytoskeleton during development, morphogenesis and cell migration. The SRF-MRTFA complex activity responds to Rho GTPase-induced changes in cellular globular actin (G-actin) concentration, thereby coupling cytoskeletal gene expression to cytoskeletal dynamics. Required for cardiac differentiation and maturation.</text>
</comment>
<comment type="subunit">
    <text evidence="1 4 7 8 9 10 11 12">Binds DNA as a multimer, probably a dimer (PubMed:7637780). Interacts with MRTFA, forming the SRF-MRTFA nuclear complex which binds the 5'-CArG-3' consensus motif (CArG box) on DNA via SRF (PubMed:14565952, PubMed:19350017). Forms a nuclear ternary complex with MRTFA and SCAI (PubMed:19350017). Interacts with MRTFB (PubMed:14565952). Interacts with MLLT7/FOXO4, NKX3A and SSRP1 (PubMed:16054032). Interacts with ARID2 (By similarity). Interacts with SRFBP1 (By similarity). Interacts with FOXK1 (PubMed:17670796). Interacts with LPXN (PubMed:18497331). Interacts with OLFM2; the interaction promotes dissociation of SRF from the transcriptional repressor HEY2, facilitates binding of SRF to target genes and promotes smooth muscle differentiation (PubMed:25298399). Interacts with NKX3-1 (By similarity). Interacts with KAT5 (By similarity). Interacts with PURB (By similarity).</text>
</comment>
<comment type="interaction">
    <interactant intactId="EBI-493034">
        <id>P11831</id>
    </interactant>
    <interactant intactId="EBI-457886">
        <id>P35269</id>
        <label>GTF2F1</label>
    </interactant>
    <organismsDiffer>false</organismsDiffer>
    <experiments>2</experiments>
</comment>
<comment type="interaction">
    <interactant intactId="EBI-493034">
        <id>P11831</id>
    </interactant>
    <interactant intactId="EBI-493122">
        <id>Q969V6</id>
        <label>MRTFA</label>
    </interactant>
    <organismsDiffer>false</organismsDiffer>
    <experiments>2</experiments>
</comment>
<comment type="interaction">
    <interactant intactId="EBI-493034">
        <id>P11831</id>
    </interactant>
    <interactant intactId="EBI-493007">
        <id>Q9ULH7</id>
        <label>MRTFB</label>
    </interactant>
    <organismsDiffer>false</organismsDiffer>
    <experiments>3</experiments>
</comment>
<comment type="interaction">
    <interactant intactId="EBI-493034">
        <id>P11831</id>
    </interactant>
    <interactant intactId="EBI-493384">
        <id>Q8IZQ8</id>
        <label>MYOCD</label>
    </interactant>
    <organismsDiffer>false</organismsDiffer>
    <experiments>2</experiments>
</comment>
<comment type="subcellular location">
    <subcellularLocation>
        <location evidence="2 10">Nucleus</location>
    </subcellularLocation>
</comment>
<comment type="PTM">
    <text evidence="6 13 14">Phosphorylated by PRKDC.</text>
</comment>
<dbReference type="EMBL" id="J03161">
    <property type="protein sequence ID" value="AAA36647.1"/>
    <property type="molecule type" value="mRNA"/>
</dbReference>
<dbReference type="EMBL" id="AL133375">
    <property type="status" value="NOT_ANNOTATED_CDS"/>
    <property type="molecule type" value="Genomic_DNA"/>
</dbReference>
<dbReference type="EMBL" id="AL355385">
    <property type="status" value="NOT_ANNOTATED_CDS"/>
    <property type="molecule type" value="Genomic_DNA"/>
</dbReference>
<dbReference type="EMBL" id="CH471081">
    <property type="protein sequence ID" value="EAX04161.1"/>
    <property type="molecule type" value="Genomic_DNA"/>
</dbReference>
<dbReference type="EMBL" id="BC048211">
    <property type="protein sequence ID" value="AAH48211.1"/>
    <property type="molecule type" value="mRNA"/>
</dbReference>
<dbReference type="EMBL" id="BC052572">
    <property type="protein sequence ID" value="AAH52572.1"/>
    <property type="molecule type" value="mRNA"/>
</dbReference>
<dbReference type="CCDS" id="CCDS4889.1"/>
<dbReference type="PIR" id="A31637">
    <property type="entry name" value="A31637"/>
</dbReference>
<dbReference type="RefSeq" id="NP_001278930.1">
    <property type="nucleotide sequence ID" value="NM_001292001.1"/>
</dbReference>
<dbReference type="RefSeq" id="NP_003122.1">
    <property type="nucleotide sequence ID" value="NM_003131.4"/>
</dbReference>
<dbReference type="PDB" id="1HBX">
    <property type="method" value="X-ray"/>
    <property type="resolution" value="3.15 A"/>
    <property type="chains" value="A/B/D/E=132-223"/>
</dbReference>
<dbReference type="PDB" id="1K6O">
    <property type="method" value="X-ray"/>
    <property type="resolution" value="3.19 A"/>
    <property type="chains" value="B/C=133-235"/>
</dbReference>
<dbReference type="PDB" id="1SRS">
    <property type="method" value="X-ray"/>
    <property type="resolution" value="3.20 A"/>
    <property type="chains" value="A/B=132-223"/>
</dbReference>
<dbReference type="PDBsum" id="1HBX"/>
<dbReference type="PDBsum" id="1K6O"/>
<dbReference type="PDBsum" id="1SRS"/>
<dbReference type="SMR" id="P11831"/>
<dbReference type="BioGRID" id="112600">
    <property type="interactions" value="117"/>
</dbReference>
<dbReference type="CORUM" id="P11831"/>
<dbReference type="DIP" id="DIP-49N"/>
<dbReference type="ELM" id="P11831"/>
<dbReference type="FunCoup" id="P11831">
    <property type="interactions" value="4394"/>
</dbReference>
<dbReference type="IntAct" id="P11831">
    <property type="interactions" value="59"/>
</dbReference>
<dbReference type="MINT" id="P11831"/>
<dbReference type="STRING" id="9606.ENSP00000265354"/>
<dbReference type="ChEMBL" id="CHEMBL4523184"/>
<dbReference type="GlyConnect" id="561">
    <property type="glycosylation" value="1 O-GlcNAc glycan (2 sites)"/>
</dbReference>
<dbReference type="GlyCosmos" id="P11831">
    <property type="glycosylation" value="15 sites, 1 glycan"/>
</dbReference>
<dbReference type="GlyGen" id="P11831">
    <property type="glycosylation" value="17 sites, 1 N-linked glycan (1 site), 1 O-linked glycan (15 sites)"/>
</dbReference>
<dbReference type="iPTMnet" id="P11831"/>
<dbReference type="PhosphoSitePlus" id="P11831"/>
<dbReference type="BioMuta" id="SRF"/>
<dbReference type="DMDM" id="134876"/>
<dbReference type="CPTAC" id="CPTAC-1727"/>
<dbReference type="CPTAC" id="CPTAC-1764"/>
<dbReference type="jPOST" id="P11831"/>
<dbReference type="MassIVE" id="P11831"/>
<dbReference type="PaxDb" id="9606-ENSP00000265354"/>
<dbReference type="PeptideAtlas" id="P11831"/>
<dbReference type="ProteomicsDB" id="52806"/>
<dbReference type="Pumba" id="P11831"/>
<dbReference type="Antibodypedia" id="900">
    <property type="antibodies" value="719 antibodies from 41 providers"/>
</dbReference>
<dbReference type="DNASU" id="6722"/>
<dbReference type="Ensembl" id="ENST00000265354.6">
    <property type="protein sequence ID" value="ENSP00000265354.4"/>
    <property type="gene ID" value="ENSG00000112658.8"/>
</dbReference>
<dbReference type="GeneID" id="6722"/>
<dbReference type="KEGG" id="hsa:6722"/>
<dbReference type="MANE-Select" id="ENST00000265354.6">
    <property type="protein sequence ID" value="ENSP00000265354.4"/>
    <property type="RefSeq nucleotide sequence ID" value="NM_003131.4"/>
    <property type="RefSeq protein sequence ID" value="NP_003122.1"/>
</dbReference>
<dbReference type="UCSC" id="uc003oui.4">
    <property type="organism name" value="human"/>
</dbReference>
<dbReference type="AGR" id="HGNC:11291"/>
<dbReference type="CTD" id="6722"/>
<dbReference type="DisGeNET" id="6722"/>
<dbReference type="GeneCards" id="SRF"/>
<dbReference type="HGNC" id="HGNC:11291">
    <property type="gene designation" value="SRF"/>
</dbReference>
<dbReference type="HPA" id="ENSG00000112658">
    <property type="expression patterns" value="Low tissue specificity"/>
</dbReference>
<dbReference type="MalaCards" id="SRF"/>
<dbReference type="MIM" id="600589">
    <property type="type" value="gene"/>
</dbReference>
<dbReference type="neXtProt" id="NX_P11831"/>
<dbReference type="OpenTargets" id="ENSG00000112658"/>
<dbReference type="PharmGKB" id="PA36116"/>
<dbReference type="VEuPathDB" id="HostDB:ENSG00000112658"/>
<dbReference type="eggNOG" id="KOG0015">
    <property type="taxonomic scope" value="Eukaryota"/>
</dbReference>
<dbReference type="GeneTree" id="ENSGT00400000022158"/>
<dbReference type="HOGENOM" id="CLU_042048_1_0_1"/>
<dbReference type="InParanoid" id="P11831"/>
<dbReference type="OMA" id="GCLKREA"/>
<dbReference type="OrthoDB" id="2284405at2759"/>
<dbReference type="PAN-GO" id="P11831">
    <property type="GO annotations" value="3 GO annotations based on evolutionary models"/>
</dbReference>
<dbReference type="PhylomeDB" id="P11831"/>
<dbReference type="TreeFam" id="TF318482"/>
<dbReference type="PathwayCommons" id="P11831"/>
<dbReference type="Reactome" id="R-HSA-5663220">
    <property type="pathway name" value="RHO GTPases Activate Formins"/>
</dbReference>
<dbReference type="Reactome" id="R-HSA-9031628">
    <property type="pathway name" value="NGF-stimulated transcription"/>
</dbReference>
<dbReference type="Reactome" id="R-HSA-9634638">
    <property type="pathway name" value="Estrogen-dependent nuclear events downstream of ESR-membrane signaling"/>
</dbReference>
<dbReference type="Reactome" id="R-HSA-9733709">
    <property type="pathway name" value="Cardiogenesis"/>
</dbReference>
<dbReference type="Reactome" id="R-HSA-9768777">
    <property type="pathway name" value="Regulation of NPAS4 gene transcription"/>
</dbReference>
<dbReference type="SignaLink" id="P11831"/>
<dbReference type="SIGNOR" id="P11831"/>
<dbReference type="BioGRID-ORCS" id="6722">
    <property type="hits" value="418 hits in 1187 CRISPR screens"/>
</dbReference>
<dbReference type="ChiTaRS" id="SRF">
    <property type="organism name" value="human"/>
</dbReference>
<dbReference type="EvolutionaryTrace" id="P11831"/>
<dbReference type="GeneWiki" id="Serum_response_factor"/>
<dbReference type="GenomeRNAi" id="6722"/>
<dbReference type="Pharos" id="P11831">
    <property type="development level" value="Tbio"/>
</dbReference>
<dbReference type="PRO" id="PR:P11831"/>
<dbReference type="Proteomes" id="UP000005640">
    <property type="component" value="Chromosome 6"/>
</dbReference>
<dbReference type="RNAct" id="P11831">
    <property type="molecule type" value="protein"/>
</dbReference>
<dbReference type="Bgee" id="ENSG00000112658">
    <property type="expression patterns" value="Expressed in lower esophagus muscularis layer and 204 other cell types or tissues"/>
</dbReference>
<dbReference type="ExpressionAtlas" id="P11831">
    <property type="expression patterns" value="baseline and differential"/>
</dbReference>
<dbReference type="GO" id="GO:0000785">
    <property type="term" value="C:chromatin"/>
    <property type="evidence" value="ECO:0007669"/>
    <property type="project" value="Ensembl"/>
</dbReference>
<dbReference type="GO" id="GO:0005737">
    <property type="term" value="C:cytoplasm"/>
    <property type="evidence" value="ECO:0000304"/>
    <property type="project" value="BHF-UCL"/>
</dbReference>
<dbReference type="GO" id="GO:0005654">
    <property type="term" value="C:nucleoplasm"/>
    <property type="evidence" value="ECO:0000304"/>
    <property type="project" value="Reactome"/>
</dbReference>
<dbReference type="GO" id="GO:0005634">
    <property type="term" value="C:nucleus"/>
    <property type="evidence" value="ECO:0000314"/>
    <property type="project" value="BHF-UCL"/>
</dbReference>
<dbReference type="GO" id="GO:0031490">
    <property type="term" value="F:chromatin DNA binding"/>
    <property type="evidence" value="ECO:0007669"/>
    <property type="project" value="Ensembl"/>
</dbReference>
<dbReference type="GO" id="GO:0001228">
    <property type="term" value="F:DNA-binding transcription activator activity, RNA polymerase II-specific"/>
    <property type="evidence" value="ECO:0000314"/>
    <property type="project" value="UniProtKB"/>
</dbReference>
<dbReference type="GO" id="GO:0003700">
    <property type="term" value="F:DNA-binding transcription factor activity"/>
    <property type="evidence" value="ECO:0000314"/>
    <property type="project" value="BHF-UCL"/>
</dbReference>
<dbReference type="GO" id="GO:0000981">
    <property type="term" value="F:DNA-binding transcription factor activity, RNA polymerase II-specific"/>
    <property type="evidence" value="ECO:0000318"/>
    <property type="project" value="GO_Central"/>
</dbReference>
<dbReference type="GO" id="GO:0140297">
    <property type="term" value="F:DNA-binding transcription factor binding"/>
    <property type="evidence" value="ECO:0000353"/>
    <property type="project" value="UniProtKB"/>
</dbReference>
<dbReference type="GO" id="GO:0042826">
    <property type="term" value="F:histone deacetylase binding"/>
    <property type="evidence" value="ECO:0007669"/>
    <property type="project" value="Ensembl"/>
</dbReference>
<dbReference type="GO" id="GO:0070878">
    <property type="term" value="F:primary miRNA binding"/>
    <property type="evidence" value="ECO:0000250"/>
    <property type="project" value="BHF-UCL"/>
</dbReference>
<dbReference type="GO" id="GO:0042803">
    <property type="term" value="F:protein homodimerization activity"/>
    <property type="evidence" value="ECO:0000353"/>
    <property type="project" value="BHF-UCL"/>
</dbReference>
<dbReference type="GO" id="GO:0000978">
    <property type="term" value="F:RNA polymerase II cis-regulatory region sequence-specific DNA binding"/>
    <property type="evidence" value="ECO:0000314"/>
    <property type="project" value="GO_Central"/>
</dbReference>
<dbReference type="GO" id="GO:0061629">
    <property type="term" value="F:RNA polymerase II-specific DNA-binding transcription factor binding"/>
    <property type="evidence" value="ECO:0007669"/>
    <property type="project" value="Ensembl"/>
</dbReference>
<dbReference type="GO" id="GO:1990837">
    <property type="term" value="F:sequence-specific double-stranded DNA binding"/>
    <property type="evidence" value="ECO:0000314"/>
    <property type="project" value="ARUK-UCL"/>
</dbReference>
<dbReference type="GO" id="GO:0010736">
    <property type="term" value="F:serum response element binding"/>
    <property type="evidence" value="ECO:0000314"/>
    <property type="project" value="ARUK-UCL"/>
</dbReference>
<dbReference type="GO" id="GO:0030036">
    <property type="term" value="P:actin cytoskeleton organization"/>
    <property type="evidence" value="ECO:0000250"/>
    <property type="project" value="UniProtKB"/>
</dbReference>
<dbReference type="GO" id="GO:0060055">
    <property type="term" value="P:angiogenesis involved in wound healing"/>
    <property type="evidence" value="ECO:0000304"/>
    <property type="project" value="BHF-UCL"/>
</dbReference>
<dbReference type="GO" id="GO:0008306">
    <property type="term" value="P:associative learning"/>
    <property type="evidence" value="ECO:0007669"/>
    <property type="project" value="Ensembl"/>
</dbReference>
<dbReference type="GO" id="GO:0048675">
    <property type="term" value="P:axon extension"/>
    <property type="evidence" value="ECO:0007669"/>
    <property type="project" value="Ensembl"/>
</dbReference>
<dbReference type="GO" id="GO:0070830">
    <property type="term" value="P:bicellular tight junction assembly"/>
    <property type="evidence" value="ECO:0007669"/>
    <property type="project" value="Ensembl"/>
</dbReference>
<dbReference type="GO" id="GO:0001569">
    <property type="term" value="P:branching involved in blood vessel morphogenesis"/>
    <property type="evidence" value="ECO:0007669"/>
    <property type="project" value="Ensembl"/>
</dbReference>
<dbReference type="GO" id="GO:0060532">
    <property type="term" value="P:bronchus cartilage development"/>
    <property type="evidence" value="ECO:0007669"/>
    <property type="project" value="Ensembl"/>
</dbReference>
<dbReference type="GO" id="GO:0060379">
    <property type="term" value="P:cardiac muscle cell myoblast differentiation"/>
    <property type="evidence" value="ECO:0000316"/>
    <property type="project" value="BHF-UCL"/>
</dbReference>
<dbReference type="GO" id="GO:0055003">
    <property type="term" value="P:cardiac myofibril assembly"/>
    <property type="evidence" value="ECO:0007669"/>
    <property type="project" value="Ensembl"/>
</dbReference>
<dbReference type="GO" id="GO:0060947">
    <property type="term" value="P:cardiac vascular smooth muscle cell differentiation"/>
    <property type="evidence" value="ECO:0007669"/>
    <property type="project" value="Ensembl"/>
</dbReference>
<dbReference type="GO" id="GO:0002042">
    <property type="term" value="P:cell migration involved in sprouting angiogenesis"/>
    <property type="evidence" value="ECO:0000315"/>
    <property type="project" value="BHF-UCL"/>
</dbReference>
<dbReference type="GO" id="GO:0007160">
    <property type="term" value="P:cell-matrix adhesion"/>
    <property type="evidence" value="ECO:0007669"/>
    <property type="project" value="Ensembl"/>
</dbReference>
<dbReference type="GO" id="GO:0071333">
    <property type="term" value="P:cellular response to glucose stimulus"/>
    <property type="evidence" value="ECO:0007669"/>
    <property type="project" value="Ensembl"/>
</dbReference>
<dbReference type="GO" id="GO:0090398">
    <property type="term" value="P:cellular senescence"/>
    <property type="evidence" value="ECO:0000315"/>
    <property type="project" value="BHF-UCL"/>
</dbReference>
<dbReference type="GO" id="GO:0035912">
    <property type="term" value="P:dorsal aorta morphogenesis"/>
    <property type="evidence" value="ECO:0007669"/>
    <property type="project" value="Ensembl"/>
</dbReference>
<dbReference type="GO" id="GO:0090136">
    <property type="term" value="P:epithelial cell-cell adhesion"/>
    <property type="evidence" value="ECO:0007669"/>
    <property type="project" value="Ensembl"/>
</dbReference>
<dbReference type="GO" id="GO:0010669">
    <property type="term" value="P:epithelial structure maintenance"/>
    <property type="evidence" value="ECO:0007669"/>
    <property type="project" value="Ensembl"/>
</dbReference>
<dbReference type="GO" id="GO:0048821">
    <property type="term" value="P:erythrocyte development"/>
    <property type="evidence" value="ECO:0007669"/>
    <property type="project" value="Ensembl"/>
</dbReference>
<dbReference type="GO" id="GO:0061436">
    <property type="term" value="P:establishment of skin barrier"/>
    <property type="evidence" value="ECO:0007669"/>
    <property type="project" value="Ensembl"/>
</dbReference>
<dbReference type="GO" id="GO:0061029">
    <property type="term" value="P:eyelid development in camera-type eye"/>
    <property type="evidence" value="ECO:0007669"/>
    <property type="project" value="Ensembl"/>
</dbReference>
<dbReference type="GO" id="GO:0060324">
    <property type="term" value="P:face development"/>
    <property type="evidence" value="ECO:0007669"/>
    <property type="project" value="Ensembl"/>
</dbReference>
<dbReference type="GO" id="GO:0046847">
    <property type="term" value="P:filopodium assembly"/>
    <property type="evidence" value="ECO:0007669"/>
    <property type="project" value="Ensembl"/>
</dbReference>
<dbReference type="GO" id="GO:0007507">
    <property type="term" value="P:heart development"/>
    <property type="evidence" value="ECO:0000250"/>
    <property type="project" value="BHF-UCL"/>
</dbReference>
<dbReference type="GO" id="GO:0001947">
    <property type="term" value="P:heart looping"/>
    <property type="evidence" value="ECO:0000250"/>
    <property type="project" value="BHF-UCL"/>
</dbReference>
<dbReference type="GO" id="GO:0060347">
    <property type="term" value="P:heart trabecula formation"/>
    <property type="evidence" value="ECO:0007669"/>
    <property type="project" value="Ensembl"/>
</dbReference>
<dbReference type="GO" id="GO:0060218">
    <property type="term" value="P:hematopoietic stem cell differentiation"/>
    <property type="evidence" value="ECO:0007669"/>
    <property type="project" value="Ensembl"/>
</dbReference>
<dbReference type="GO" id="GO:0021766">
    <property type="term" value="P:hippocampus development"/>
    <property type="evidence" value="ECO:0007669"/>
    <property type="project" value="Ensembl"/>
</dbReference>
<dbReference type="GO" id="GO:0007616">
    <property type="term" value="P:long-term memory"/>
    <property type="evidence" value="ECO:0007669"/>
    <property type="project" value="Ensembl"/>
</dbReference>
<dbReference type="GO" id="GO:0060292">
    <property type="term" value="P:long-term synaptic depression"/>
    <property type="evidence" value="ECO:0007669"/>
    <property type="project" value="Ensembl"/>
</dbReference>
<dbReference type="GO" id="GO:0060425">
    <property type="term" value="P:lung morphogenesis"/>
    <property type="evidence" value="ECO:0007669"/>
    <property type="project" value="Ensembl"/>
</dbReference>
<dbReference type="GO" id="GO:0061145">
    <property type="term" value="P:lung smooth muscle development"/>
    <property type="evidence" value="ECO:0007669"/>
    <property type="project" value="Ensembl"/>
</dbReference>
<dbReference type="GO" id="GO:0035855">
    <property type="term" value="P:megakaryocyte development"/>
    <property type="evidence" value="ECO:0007669"/>
    <property type="project" value="Ensembl"/>
</dbReference>
<dbReference type="GO" id="GO:0001707">
    <property type="term" value="P:mesoderm formation"/>
    <property type="evidence" value="ECO:0007669"/>
    <property type="project" value="Ensembl"/>
</dbReference>
<dbReference type="GO" id="GO:0002011">
    <property type="term" value="P:morphogenesis of an epithelial sheet"/>
    <property type="evidence" value="ECO:0007669"/>
    <property type="project" value="Ensembl"/>
</dbReference>
<dbReference type="GO" id="GO:0046716">
    <property type="term" value="P:muscle cell cellular homeostasis"/>
    <property type="evidence" value="ECO:0000250"/>
    <property type="project" value="BHF-UCL"/>
</dbReference>
<dbReference type="GO" id="GO:1900222">
    <property type="term" value="P:negative regulation of amyloid-beta clearance"/>
    <property type="evidence" value="ECO:0000315"/>
    <property type="project" value="BHF-UCL"/>
</dbReference>
<dbReference type="GO" id="GO:0030336">
    <property type="term" value="P:negative regulation of cell migration"/>
    <property type="evidence" value="ECO:0007669"/>
    <property type="project" value="Ensembl"/>
</dbReference>
<dbReference type="GO" id="GO:0008285">
    <property type="term" value="P:negative regulation of cell population proliferation"/>
    <property type="evidence" value="ECO:0007669"/>
    <property type="project" value="Ensembl"/>
</dbReference>
<dbReference type="GO" id="GO:1902894">
    <property type="term" value="P:negative regulation of miRNA transcription"/>
    <property type="evidence" value="ECO:0000250"/>
    <property type="project" value="BHF-UCL"/>
</dbReference>
<dbReference type="GO" id="GO:0048666">
    <property type="term" value="P:neuron development"/>
    <property type="evidence" value="ECO:0000304"/>
    <property type="project" value="BHF-UCL"/>
</dbReference>
<dbReference type="GO" id="GO:0001764">
    <property type="term" value="P:neuron migration"/>
    <property type="evidence" value="ECO:0007669"/>
    <property type="project" value="Ensembl"/>
</dbReference>
<dbReference type="GO" id="GO:0030168">
    <property type="term" value="P:platelet activation"/>
    <property type="evidence" value="ECO:0007669"/>
    <property type="project" value="Ensembl"/>
</dbReference>
<dbReference type="GO" id="GO:0030220">
    <property type="term" value="P:platelet formation"/>
    <property type="evidence" value="ECO:0007669"/>
    <property type="project" value="Ensembl"/>
</dbReference>
<dbReference type="GO" id="GO:0045773">
    <property type="term" value="P:positive regulation of axon extension"/>
    <property type="evidence" value="ECO:0007669"/>
    <property type="project" value="Ensembl"/>
</dbReference>
<dbReference type="GO" id="GO:0045597">
    <property type="term" value="P:positive regulation of cell differentiation"/>
    <property type="evidence" value="ECO:0000314"/>
    <property type="project" value="MGI"/>
</dbReference>
<dbReference type="GO" id="GO:0051091">
    <property type="term" value="P:positive regulation of DNA-binding transcription factor activity"/>
    <property type="evidence" value="ECO:0000315"/>
    <property type="project" value="UniProtKB"/>
</dbReference>
<dbReference type="GO" id="GO:0051491">
    <property type="term" value="P:positive regulation of filopodium assembly"/>
    <property type="evidence" value="ECO:0007669"/>
    <property type="project" value="Ensembl"/>
</dbReference>
<dbReference type="GO" id="GO:1902895">
    <property type="term" value="P:positive regulation of miRNA transcription"/>
    <property type="evidence" value="ECO:0000316"/>
    <property type="project" value="ARUK-UCL"/>
</dbReference>
<dbReference type="GO" id="GO:0045987">
    <property type="term" value="P:positive regulation of smooth muscle contraction"/>
    <property type="evidence" value="ECO:0000314"/>
    <property type="project" value="BHF-UCL"/>
</dbReference>
<dbReference type="GO" id="GO:0046016">
    <property type="term" value="P:positive regulation of transcription by glucose"/>
    <property type="evidence" value="ECO:0007669"/>
    <property type="project" value="Ensembl"/>
</dbReference>
<dbReference type="GO" id="GO:0045944">
    <property type="term" value="P:positive regulation of transcription by RNA polymerase II"/>
    <property type="evidence" value="ECO:0000314"/>
    <property type="project" value="MGI"/>
</dbReference>
<dbReference type="GO" id="GO:0060261">
    <property type="term" value="P:positive regulation of transcription initiation by RNA polymerase II"/>
    <property type="evidence" value="ECO:0000314"/>
    <property type="project" value="BHF-UCL"/>
</dbReference>
<dbReference type="GO" id="GO:0045059">
    <property type="term" value="P:positive thymic T cell selection"/>
    <property type="evidence" value="ECO:0007669"/>
    <property type="project" value="Ensembl"/>
</dbReference>
<dbReference type="GO" id="GO:0090009">
    <property type="term" value="P:primitive streak formation"/>
    <property type="evidence" value="ECO:0007669"/>
    <property type="project" value="Ensembl"/>
</dbReference>
<dbReference type="GO" id="GO:0030155">
    <property type="term" value="P:regulation of cell adhesion"/>
    <property type="evidence" value="ECO:0007669"/>
    <property type="project" value="Ensembl"/>
</dbReference>
<dbReference type="GO" id="GO:0051150">
    <property type="term" value="P:regulation of smooth muscle cell differentiation"/>
    <property type="evidence" value="ECO:0000304"/>
    <property type="project" value="BHF-UCL"/>
</dbReference>
<dbReference type="GO" id="GO:0034097">
    <property type="term" value="P:response to cytokine"/>
    <property type="evidence" value="ECO:0000315"/>
    <property type="project" value="BHF-UCL"/>
</dbReference>
<dbReference type="GO" id="GO:0009725">
    <property type="term" value="P:response to hormone"/>
    <property type="evidence" value="ECO:0000314"/>
    <property type="project" value="BHF-UCL"/>
</dbReference>
<dbReference type="GO" id="GO:0001666">
    <property type="term" value="P:response to hypoxia"/>
    <property type="evidence" value="ECO:0000315"/>
    <property type="project" value="BHF-UCL"/>
</dbReference>
<dbReference type="GO" id="GO:0009636">
    <property type="term" value="P:response to toxic substance"/>
    <property type="evidence" value="ECO:0000304"/>
    <property type="project" value="BHF-UCL"/>
</dbReference>
<dbReference type="GO" id="GO:0045214">
    <property type="term" value="P:sarcomere organization"/>
    <property type="evidence" value="ECO:0007669"/>
    <property type="project" value="Ensembl"/>
</dbReference>
<dbReference type="GO" id="GO:0043589">
    <property type="term" value="P:skin morphogenesis"/>
    <property type="evidence" value="ECO:0007669"/>
    <property type="project" value="Ensembl"/>
</dbReference>
<dbReference type="GO" id="GO:0043149">
    <property type="term" value="P:stress fiber assembly"/>
    <property type="evidence" value="ECO:0007669"/>
    <property type="project" value="Ensembl"/>
</dbReference>
<dbReference type="GO" id="GO:0022028">
    <property type="term" value="P:tangential migration from the subventricular zone to the olfactory bulb"/>
    <property type="evidence" value="ECO:0007669"/>
    <property type="project" value="Ensembl"/>
</dbReference>
<dbReference type="GO" id="GO:0048538">
    <property type="term" value="P:thymus development"/>
    <property type="evidence" value="ECO:0007669"/>
    <property type="project" value="Ensembl"/>
</dbReference>
<dbReference type="GO" id="GO:0030878">
    <property type="term" value="P:thyroid gland development"/>
    <property type="evidence" value="ECO:0007669"/>
    <property type="project" value="Ensembl"/>
</dbReference>
<dbReference type="GO" id="GO:0060534">
    <property type="term" value="P:trachea cartilage development"/>
    <property type="evidence" value="ECO:0007669"/>
    <property type="project" value="Ensembl"/>
</dbReference>
<dbReference type="GO" id="GO:0006366">
    <property type="term" value="P:transcription by RNA polymerase II"/>
    <property type="evidence" value="ECO:0007669"/>
    <property type="project" value="Ensembl"/>
</dbReference>
<dbReference type="GO" id="GO:0001829">
    <property type="term" value="P:trophectodermal cell differentiation"/>
    <property type="evidence" value="ECO:0000314"/>
    <property type="project" value="MGI"/>
</dbReference>
<dbReference type="CDD" id="cd00266">
    <property type="entry name" value="MADS_SRF_like"/>
    <property type="match status" value="1"/>
</dbReference>
<dbReference type="FunFam" id="3.40.1810.10:FF:000002">
    <property type="entry name" value="Serum response factor b"/>
    <property type="match status" value="1"/>
</dbReference>
<dbReference type="Gene3D" id="3.40.1810.10">
    <property type="entry name" value="Transcription factor, MADS-box"/>
    <property type="match status" value="1"/>
</dbReference>
<dbReference type="IDEAL" id="IID00140"/>
<dbReference type="InterPro" id="IPR050142">
    <property type="entry name" value="MADS-box/MEF2_TF"/>
</dbReference>
<dbReference type="InterPro" id="IPR033897">
    <property type="entry name" value="SRF-like_MADS-box"/>
</dbReference>
<dbReference type="InterPro" id="IPR002100">
    <property type="entry name" value="TF_MADSbox"/>
</dbReference>
<dbReference type="InterPro" id="IPR036879">
    <property type="entry name" value="TF_MADSbox_sf"/>
</dbReference>
<dbReference type="PANTHER" id="PTHR48019">
    <property type="entry name" value="SERUM RESPONSE FACTOR HOMOLOG"/>
    <property type="match status" value="1"/>
</dbReference>
<dbReference type="Pfam" id="PF00319">
    <property type="entry name" value="SRF-TF"/>
    <property type="match status" value="1"/>
</dbReference>
<dbReference type="PRINTS" id="PR00404">
    <property type="entry name" value="MADSDOMAIN"/>
</dbReference>
<dbReference type="SMART" id="SM00432">
    <property type="entry name" value="MADS"/>
    <property type="match status" value="1"/>
</dbReference>
<dbReference type="SUPFAM" id="SSF55455">
    <property type="entry name" value="SRF-like"/>
    <property type="match status" value="1"/>
</dbReference>
<dbReference type="PROSITE" id="PS00350">
    <property type="entry name" value="MADS_BOX_1"/>
    <property type="match status" value="1"/>
</dbReference>
<dbReference type="PROSITE" id="PS50066">
    <property type="entry name" value="MADS_BOX_2"/>
    <property type="match status" value="1"/>
</dbReference>
<sequence>MLPTQAGAAAALGRGSALGGSLNRTPTGRPGGGGGTRGANGGRVPGNGAGLGPGRLEREAAAAAATTPAPTAGALYSGSEGDSESGEEEELGAERRGLKRSLSEMEIGMVVGGPEASAAATGGYGPVSGAVSGAKPGKKTRGRVKIKMEFIDNKLRRYTTFSKRKTGIMKKAYELSTLTGTQVLLLVASETGHVYTFATRKLQPMITSETGKALIQTCLNSPDSPPRSDPTTDQRMSATGFEETDLTYQVSESDSSGETKDTLKPAFTVTNLPGTTSTIQTAPSTSTTMQVSSGPSFPITNYLAPVSASVSPSAVSSANGTVLKSTGSGPVSSGGLMQLPTSFTLMPGGAVAQQVPVQAIQVHQAPQQASPSRDSSTDLTQTSSSGTVTLPATIMTSSVPTTVGGHMMYPSPHAVMYAPTSGLGDGSLTVLNAFSQAPSTMQVSHSQVQEPGGVPQVFLTASSGTVQIPVSAVQLHQMAVIGQQAGSSSNLTELQVVNLDTAHSTKSE</sequence>
<feature type="chain" id="PRO_0000199423" description="Serum response factor">
    <location>
        <begin position="1"/>
        <end position="508"/>
    </location>
</feature>
<feature type="domain" description="MADS-box" evidence="2">
    <location>
        <begin position="141"/>
        <end position="201"/>
    </location>
</feature>
<feature type="DNA-binding region">
    <location>
        <begin position="133"/>
        <end position="222"/>
    </location>
</feature>
<feature type="region of interest" description="Disordered" evidence="3">
    <location>
        <begin position="1"/>
        <end position="97"/>
    </location>
</feature>
<feature type="region of interest" description="Involved in dimerization">
    <location>
        <begin position="168"/>
        <end position="222"/>
    </location>
</feature>
<feature type="region of interest" description="Disordered" evidence="3">
    <location>
        <begin position="219"/>
        <end position="240"/>
    </location>
</feature>
<feature type="region of interest" description="Disordered" evidence="3">
    <location>
        <begin position="362"/>
        <end position="385"/>
    </location>
</feature>
<feature type="compositionally biased region" description="Low complexity" evidence="3">
    <location>
        <begin position="1"/>
        <end position="28"/>
    </location>
</feature>
<feature type="compositionally biased region" description="Gly residues" evidence="3">
    <location>
        <begin position="29"/>
        <end position="53"/>
    </location>
</feature>
<feature type="compositionally biased region" description="Low complexity" evidence="3">
    <location>
        <begin position="61"/>
        <end position="80"/>
    </location>
</feature>
<feature type="compositionally biased region" description="Acidic residues" evidence="3">
    <location>
        <begin position="81"/>
        <end position="91"/>
    </location>
</feature>
<feature type="modified residue" description="Phosphoserine" evidence="6 17">
    <location>
        <position position="77"/>
    </location>
</feature>
<feature type="modified residue" description="Phosphoserine" evidence="6 17">
    <location>
        <position position="79"/>
    </location>
</feature>
<feature type="modified residue" description="Phosphoserine" evidence="6 17">
    <location>
        <position position="83"/>
    </location>
</feature>
<feature type="modified residue" description="Phosphoserine" evidence="6 17">
    <location>
        <position position="85"/>
    </location>
</feature>
<feature type="modified residue" description="Phosphoserine" evidence="6">
    <location>
        <position position="103"/>
    </location>
</feature>
<feature type="modified residue" description="Phosphoserine" evidence="16 17 18 19 20">
    <location>
        <position position="224"/>
    </location>
</feature>
<feature type="modified residue" description="Phosphoserine" evidence="13">
    <location>
        <position position="253"/>
    </location>
</feature>
<feature type="modified residue" description="Phosphoserine; by dsDNA kinase" evidence="14">
    <location>
        <position position="435"/>
    </location>
</feature>
<feature type="modified residue" description="Phosphoserine; by dsDNA kinase" evidence="14">
    <location>
        <position position="446"/>
    </location>
</feature>
<feature type="glycosylation site" id="CAR_000181" description="O-linked (GlcNAc) serine" evidence="5">
    <location>
        <position position="277"/>
    </location>
</feature>
<feature type="glycosylation site" description="O-linked (GlcNAc) serine" evidence="15">
    <location>
        <position position="307"/>
    </location>
</feature>
<feature type="glycosylation site" description="O-linked (GlcNAc) serine" evidence="15">
    <location>
        <position position="309"/>
    </location>
</feature>
<feature type="glycosylation site" id="CAR_000196" description="O-linked (GlcNAc) serine" evidence="5">
    <location>
        <position position="316"/>
    </location>
</feature>
<feature type="glycosylation site" description="O-linked (GlcNAc) serine" evidence="15">
    <location>
        <position position="383"/>
    </location>
</feature>
<feature type="helix" evidence="21">
    <location>
        <begin position="154"/>
        <end position="179"/>
    </location>
</feature>
<feature type="strand" evidence="21">
    <location>
        <begin position="182"/>
        <end position="188"/>
    </location>
</feature>
<feature type="strand" evidence="22">
    <location>
        <begin position="190"/>
        <end position="192"/>
    </location>
</feature>
<feature type="strand" evidence="21">
    <location>
        <begin position="194"/>
        <end position="198"/>
    </location>
</feature>
<feature type="helix" evidence="21">
    <location>
        <begin position="200"/>
        <end position="205"/>
    </location>
</feature>
<feature type="helix" evidence="21">
    <location>
        <begin position="209"/>
        <end position="220"/>
    </location>
</feature>
<proteinExistence type="evidence at protein level"/>
<evidence type="ECO:0000250" key="1">
    <source>
        <dbReference type="UniProtKB" id="Q9JM73"/>
    </source>
</evidence>
<evidence type="ECO:0000255" key="2">
    <source>
        <dbReference type="PROSITE-ProRule" id="PRU00251"/>
    </source>
</evidence>
<evidence type="ECO:0000256" key="3">
    <source>
        <dbReference type="SAM" id="MobiDB-lite"/>
    </source>
</evidence>
<evidence type="ECO:0000269" key="4">
    <source>
    </source>
</evidence>
<evidence type="ECO:0000269" key="5">
    <source>
    </source>
</evidence>
<evidence type="ECO:0000269" key="6">
    <source>
    </source>
</evidence>
<evidence type="ECO:0000269" key="7">
    <source>
    </source>
</evidence>
<evidence type="ECO:0000269" key="8">
    <source>
    </source>
</evidence>
<evidence type="ECO:0000269" key="9">
    <source>
    </source>
</evidence>
<evidence type="ECO:0000269" key="10">
    <source>
    </source>
</evidence>
<evidence type="ECO:0000269" key="11">
    <source>
    </source>
</evidence>
<evidence type="ECO:0000269" key="12">
    <source>
    </source>
</evidence>
<evidence type="ECO:0000269" key="13">
    <source>
    </source>
</evidence>
<evidence type="ECO:0000269" key="14">
    <source>
    </source>
</evidence>
<evidence type="ECO:0000305" key="15">
    <source>
    </source>
</evidence>
<evidence type="ECO:0007744" key="16">
    <source>
    </source>
</evidence>
<evidence type="ECO:0007744" key="17">
    <source>
    </source>
</evidence>
<evidence type="ECO:0007744" key="18">
    <source>
    </source>
</evidence>
<evidence type="ECO:0007744" key="19">
    <source>
    </source>
</evidence>
<evidence type="ECO:0007744" key="20">
    <source>
    </source>
</evidence>
<evidence type="ECO:0007829" key="21">
    <source>
        <dbReference type="PDB" id="1HBX"/>
    </source>
</evidence>
<evidence type="ECO:0007829" key="22">
    <source>
        <dbReference type="PDB" id="1K6O"/>
    </source>
</evidence>
<organism>
    <name type="scientific">Homo sapiens</name>
    <name type="common">Human</name>
    <dbReference type="NCBI Taxonomy" id="9606"/>
    <lineage>
        <taxon>Eukaryota</taxon>
        <taxon>Metazoa</taxon>
        <taxon>Chordata</taxon>
        <taxon>Craniata</taxon>
        <taxon>Vertebrata</taxon>
        <taxon>Euteleostomi</taxon>
        <taxon>Mammalia</taxon>
        <taxon>Eutheria</taxon>
        <taxon>Euarchontoglires</taxon>
        <taxon>Primates</taxon>
        <taxon>Haplorrhini</taxon>
        <taxon>Catarrhini</taxon>
        <taxon>Hominidae</taxon>
        <taxon>Homo</taxon>
    </lineage>
</organism>
<protein>
    <recommendedName>
        <fullName>Serum response factor</fullName>
        <shortName>SRF</shortName>
    </recommendedName>
</protein>
<name>SRF_HUMAN</name>
<accession>P11831</accession>
<accession>Q5T648</accession>
<gene>
    <name type="primary">SRF</name>
</gene>
<reference key="1">
    <citation type="journal article" date="1988" name="Cell">
        <title>Isolation and properties of cDNA clones encoding SRF, a transcription factor that binds to the c-fos serum response element.</title>
        <authorList>
            <person name="Norman C."/>
            <person name="Runswick M."/>
            <person name="Pollock R."/>
            <person name="Treisman R."/>
        </authorList>
    </citation>
    <scope>NUCLEOTIDE SEQUENCE [MRNA]</scope>
    <scope>PARTIAL PROTEIN SEQUENCE</scope>
</reference>
<reference key="2">
    <citation type="journal article" date="2003" name="Nature">
        <title>The DNA sequence and analysis of human chromosome 6.</title>
        <authorList>
            <person name="Mungall A.J."/>
            <person name="Palmer S.A."/>
            <person name="Sims S.K."/>
            <person name="Edwards C.A."/>
            <person name="Ashurst J.L."/>
            <person name="Wilming L."/>
            <person name="Jones M.C."/>
            <person name="Horton R."/>
            <person name="Hunt S.E."/>
            <person name="Scott C.E."/>
            <person name="Gilbert J.G.R."/>
            <person name="Clamp M.E."/>
            <person name="Bethel G."/>
            <person name="Milne S."/>
            <person name="Ainscough R."/>
            <person name="Almeida J.P."/>
            <person name="Ambrose K.D."/>
            <person name="Andrews T.D."/>
            <person name="Ashwell R.I.S."/>
            <person name="Babbage A.K."/>
            <person name="Bagguley C.L."/>
            <person name="Bailey J."/>
            <person name="Banerjee R."/>
            <person name="Barker D.J."/>
            <person name="Barlow K.F."/>
            <person name="Bates K."/>
            <person name="Beare D.M."/>
            <person name="Beasley H."/>
            <person name="Beasley O."/>
            <person name="Bird C.P."/>
            <person name="Blakey S.E."/>
            <person name="Bray-Allen S."/>
            <person name="Brook J."/>
            <person name="Brown A.J."/>
            <person name="Brown J.Y."/>
            <person name="Burford D.C."/>
            <person name="Burrill W."/>
            <person name="Burton J."/>
            <person name="Carder C."/>
            <person name="Carter N.P."/>
            <person name="Chapman J.C."/>
            <person name="Clark S.Y."/>
            <person name="Clark G."/>
            <person name="Clee C.M."/>
            <person name="Clegg S."/>
            <person name="Cobley V."/>
            <person name="Collier R.E."/>
            <person name="Collins J.E."/>
            <person name="Colman L.K."/>
            <person name="Corby N.R."/>
            <person name="Coville G.J."/>
            <person name="Culley K.M."/>
            <person name="Dhami P."/>
            <person name="Davies J."/>
            <person name="Dunn M."/>
            <person name="Earthrowl M.E."/>
            <person name="Ellington A.E."/>
            <person name="Evans K.A."/>
            <person name="Faulkner L."/>
            <person name="Francis M.D."/>
            <person name="Frankish A."/>
            <person name="Frankland J."/>
            <person name="French L."/>
            <person name="Garner P."/>
            <person name="Garnett J."/>
            <person name="Ghori M.J."/>
            <person name="Gilby L.M."/>
            <person name="Gillson C.J."/>
            <person name="Glithero R.J."/>
            <person name="Grafham D.V."/>
            <person name="Grant M."/>
            <person name="Gribble S."/>
            <person name="Griffiths C."/>
            <person name="Griffiths M.N.D."/>
            <person name="Hall R."/>
            <person name="Halls K.S."/>
            <person name="Hammond S."/>
            <person name="Harley J.L."/>
            <person name="Hart E.A."/>
            <person name="Heath P.D."/>
            <person name="Heathcott R."/>
            <person name="Holmes S.J."/>
            <person name="Howden P.J."/>
            <person name="Howe K.L."/>
            <person name="Howell G.R."/>
            <person name="Huckle E."/>
            <person name="Humphray S.J."/>
            <person name="Humphries M.D."/>
            <person name="Hunt A.R."/>
            <person name="Johnson C.M."/>
            <person name="Joy A.A."/>
            <person name="Kay M."/>
            <person name="Keenan S.J."/>
            <person name="Kimberley A.M."/>
            <person name="King A."/>
            <person name="Laird G.K."/>
            <person name="Langford C."/>
            <person name="Lawlor S."/>
            <person name="Leongamornlert D.A."/>
            <person name="Leversha M."/>
            <person name="Lloyd C.R."/>
            <person name="Lloyd D.M."/>
            <person name="Loveland J.E."/>
            <person name="Lovell J."/>
            <person name="Martin S."/>
            <person name="Mashreghi-Mohammadi M."/>
            <person name="Maslen G.L."/>
            <person name="Matthews L."/>
            <person name="McCann O.T."/>
            <person name="McLaren S.J."/>
            <person name="McLay K."/>
            <person name="McMurray A."/>
            <person name="Moore M.J.F."/>
            <person name="Mullikin J.C."/>
            <person name="Niblett D."/>
            <person name="Nickerson T."/>
            <person name="Novik K.L."/>
            <person name="Oliver K."/>
            <person name="Overton-Larty E.K."/>
            <person name="Parker A."/>
            <person name="Patel R."/>
            <person name="Pearce A.V."/>
            <person name="Peck A.I."/>
            <person name="Phillimore B.J.C.T."/>
            <person name="Phillips S."/>
            <person name="Plumb R.W."/>
            <person name="Porter K.M."/>
            <person name="Ramsey Y."/>
            <person name="Ranby S.A."/>
            <person name="Rice C.M."/>
            <person name="Ross M.T."/>
            <person name="Searle S.M."/>
            <person name="Sehra H.K."/>
            <person name="Sheridan E."/>
            <person name="Skuce C.D."/>
            <person name="Smith S."/>
            <person name="Smith M."/>
            <person name="Spraggon L."/>
            <person name="Squares S.L."/>
            <person name="Steward C.A."/>
            <person name="Sycamore N."/>
            <person name="Tamlyn-Hall G."/>
            <person name="Tester J."/>
            <person name="Theaker A.J."/>
            <person name="Thomas D.W."/>
            <person name="Thorpe A."/>
            <person name="Tracey A."/>
            <person name="Tromans A."/>
            <person name="Tubby B."/>
            <person name="Wall M."/>
            <person name="Wallis J.M."/>
            <person name="West A.P."/>
            <person name="White S.S."/>
            <person name="Whitehead S.L."/>
            <person name="Whittaker H."/>
            <person name="Wild A."/>
            <person name="Willey D.J."/>
            <person name="Wilmer T.E."/>
            <person name="Wood J.M."/>
            <person name="Wray P.W."/>
            <person name="Wyatt J.C."/>
            <person name="Young L."/>
            <person name="Younger R.M."/>
            <person name="Bentley D.R."/>
            <person name="Coulson A."/>
            <person name="Durbin R.M."/>
            <person name="Hubbard T."/>
            <person name="Sulston J.E."/>
            <person name="Dunham I."/>
            <person name="Rogers J."/>
            <person name="Beck S."/>
        </authorList>
    </citation>
    <scope>NUCLEOTIDE SEQUENCE [LARGE SCALE GENOMIC DNA]</scope>
</reference>
<reference key="3">
    <citation type="submission" date="2005-07" db="EMBL/GenBank/DDBJ databases">
        <authorList>
            <person name="Mural R.J."/>
            <person name="Istrail S."/>
            <person name="Sutton G.G."/>
            <person name="Florea L."/>
            <person name="Halpern A.L."/>
            <person name="Mobarry C.M."/>
            <person name="Lippert R."/>
            <person name="Walenz B."/>
            <person name="Shatkay H."/>
            <person name="Dew I."/>
            <person name="Miller J.R."/>
            <person name="Flanigan M.J."/>
            <person name="Edwards N.J."/>
            <person name="Bolanos R."/>
            <person name="Fasulo D."/>
            <person name="Halldorsson B.V."/>
            <person name="Hannenhalli S."/>
            <person name="Turner R."/>
            <person name="Yooseph S."/>
            <person name="Lu F."/>
            <person name="Nusskern D.R."/>
            <person name="Shue B.C."/>
            <person name="Zheng X.H."/>
            <person name="Zhong F."/>
            <person name="Delcher A.L."/>
            <person name="Huson D.H."/>
            <person name="Kravitz S.A."/>
            <person name="Mouchard L."/>
            <person name="Reinert K."/>
            <person name="Remington K.A."/>
            <person name="Clark A.G."/>
            <person name="Waterman M.S."/>
            <person name="Eichler E.E."/>
            <person name="Adams M.D."/>
            <person name="Hunkapiller M.W."/>
            <person name="Myers E.W."/>
            <person name="Venter J.C."/>
        </authorList>
    </citation>
    <scope>NUCLEOTIDE SEQUENCE [LARGE SCALE GENOMIC DNA]</scope>
</reference>
<reference key="4">
    <citation type="journal article" date="2004" name="Genome Res.">
        <title>The status, quality, and expansion of the NIH full-length cDNA project: the Mammalian Gene Collection (MGC).</title>
        <authorList>
            <consortium name="The MGC Project Team"/>
        </authorList>
    </citation>
    <scope>NUCLEOTIDE SEQUENCE [LARGE SCALE MRNA]</scope>
    <source>
        <tissue>Lung</tissue>
        <tissue>Lymph</tissue>
    </source>
</reference>
<reference key="5">
    <citation type="journal article" date="1993" name="Eur. J. Biochem.">
        <title>C-terminal phosphorylation of the serum-response factor.</title>
        <authorList>
            <person name="Janknecht R."/>
            <person name="Ernst W.H."/>
            <person name="Houthaeve T."/>
            <person name="Nordheim A."/>
        </authorList>
    </citation>
    <scope>PROTEIN SEQUENCE OF 210-221 AND 253-264</scope>
    <scope>PHOSPHORYLATION AT SER-253</scope>
</reference>
<reference key="6">
    <citation type="journal article" date="1992" name="EMBO J.">
        <title>Identification of multiple SRF N-terminal phosphorylation sites affecting DNA binding properties.</title>
        <authorList>
            <person name="Janknecht R."/>
            <person name="Hipskind R.A."/>
            <person name="Houthaeve T."/>
            <person name="Nordheim A."/>
            <person name="Stunnenberg H.G."/>
        </authorList>
    </citation>
    <scope>PHOSPHORYLATION AT SER-77; SER-79; SER-83; SER-85 AND SER-103</scope>
</reference>
<reference key="7">
    <citation type="journal article" date="1992" name="J. Biol. Chem.">
        <title>Localization of O-GlcNAc modification on the serum response transcription factor.</title>
        <authorList>
            <person name="Reason A.J."/>
            <person name="Morris H.R."/>
            <person name="Panico M."/>
            <person name="Marais R."/>
            <person name="Treisman R.H."/>
            <person name="Haltiwanger R.S."/>
            <person name="Hart G.W."/>
            <person name="Kelly W.G."/>
            <person name="Dell A."/>
        </authorList>
    </citation>
    <scope>GLYCOSYLATION AT SER-277; SER-307; SER-309; SER-316 AND SER-383</scope>
</reference>
<reference key="8">
    <citation type="journal article" date="1993" name="J. Biol. Chem.">
        <title>The carboxyl-terminal transactivation domain of human serum response factor contains DNA-activated protein kinase phosphorylation sites.</title>
        <authorList>
            <person name="Liu S.-H."/>
            <person name="Ma J.-T."/>
            <person name="Yueh A.Y."/>
            <person name="Lees-Miller S.P."/>
            <person name="Anderson C.W."/>
            <person name="Ng S.-Y."/>
        </authorList>
    </citation>
    <scope>PHOSPHORYLATION AT SER-435 AND SER-446</scope>
</reference>
<reference key="9">
    <citation type="journal article" date="2003" name="J. Biol. Chem.">
        <title>Megakaryoblastic leukemia-1/2, a transcriptional co-activator of serum response factor, is required for skeletal myogenic differentiation.</title>
        <authorList>
            <person name="Selvaraj A."/>
            <person name="Prywes R."/>
        </authorList>
    </citation>
    <scope>INTERACTION WITH MRTFA AND MRTFB</scope>
    <source>
        <tissue>Cervix carcinoma</tissue>
    </source>
</reference>
<reference key="10">
    <citation type="journal article" date="2005" name="Dev. Cell">
        <title>Phenotypic modulation of smooth muscle cells through interaction of Foxo4 and myocardin.</title>
        <authorList>
            <person name="Liu Z.-P."/>
            <person name="Wang Z."/>
            <person name="Yanagisawa H."/>
            <person name="Olson E.N."/>
        </authorList>
    </citation>
    <scope>INTERACTION WITH MLLT7</scope>
</reference>
<reference key="11">
    <citation type="journal article" date="2006" name="Cell">
        <title>Global, in vivo, and site-specific phosphorylation dynamics in signaling networks.</title>
        <authorList>
            <person name="Olsen J.V."/>
            <person name="Blagoev B."/>
            <person name="Gnad F."/>
            <person name="Macek B."/>
            <person name="Kumar C."/>
            <person name="Mortensen P."/>
            <person name="Mann M."/>
        </authorList>
    </citation>
    <scope>PHOSPHORYLATION [LARGE SCALE ANALYSIS] AT SER-224</scope>
    <scope>IDENTIFICATION BY MASS SPECTROMETRY [LARGE SCALE ANALYSIS]</scope>
    <source>
        <tissue>Cervix carcinoma</tissue>
    </source>
</reference>
<reference key="12">
    <citation type="journal article" date="2007" name="Nucleic Acids Res.">
        <title>Functional interactions between the Forkhead transcription factor FOXK1 and the MADS-box protein SRF.</title>
        <authorList>
            <person name="Freddie C.T."/>
            <person name="Ji Z."/>
            <person name="Marais A."/>
            <person name="Sharrocks A.D."/>
        </authorList>
    </citation>
    <scope>INTERACTION WITH FOXK1</scope>
</reference>
<reference key="13">
    <citation type="journal article" date="2008" name="Circ. Res.">
        <title>The LIM protein leupaxin is enriched in smooth muscle and functions as an serum response factor cofactor to induce smooth muscle cell gene transcription.</title>
        <authorList>
            <person name="Sundberg-Smith L.J."/>
            <person name="DiMichele L.A."/>
            <person name="Sayers R.L."/>
            <person name="Mack C.P."/>
            <person name="Taylor J.M."/>
        </authorList>
    </citation>
    <scope>INTERACTION WITH LPXN</scope>
</reference>
<reference key="14">
    <citation type="journal article" date="2008" name="Proc. Natl. Acad. Sci. U.S.A.">
        <title>A quantitative atlas of mitotic phosphorylation.</title>
        <authorList>
            <person name="Dephoure N."/>
            <person name="Zhou C."/>
            <person name="Villen J."/>
            <person name="Beausoleil S.A."/>
            <person name="Bakalarski C.E."/>
            <person name="Elledge S.J."/>
            <person name="Gygi S.P."/>
        </authorList>
    </citation>
    <scope>PHOSPHORYLATION [LARGE SCALE ANALYSIS] AT SER-77; SER-79; SER-83; SER-85 AND SER-224</scope>
    <scope>IDENTIFICATION BY MASS SPECTROMETRY [LARGE SCALE ANALYSIS]</scope>
    <source>
        <tissue>Cervix carcinoma</tissue>
    </source>
</reference>
<reference key="15">
    <citation type="journal article" date="2009" name="Nat. Cell Biol.">
        <title>SCAI acts as a suppressor of cancer cell invasion through the transcriptional control of beta1-integrin.</title>
        <authorList>
            <person name="Brandt D.T."/>
            <person name="Baarlink C."/>
            <person name="Kitzing T.M."/>
            <person name="Kremmer E."/>
            <person name="Ivaska J."/>
            <person name="Nollau P."/>
            <person name="Grosse R."/>
        </authorList>
    </citation>
    <scope>INTERACTION WITH MRTFA AND SCAI</scope>
    <scope>SUBCELLULAR LOCATION</scope>
</reference>
<reference key="16">
    <citation type="journal article" date="2010" name="Sci. Signal.">
        <title>Quantitative phosphoproteomics reveals widespread full phosphorylation site occupancy during mitosis.</title>
        <authorList>
            <person name="Olsen J.V."/>
            <person name="Vermeulen M."/>
            <person name="Santamaria A."/>
            <person name="Kumar C."/>
            <person name="Miller M.L."/>
            <person name="Jensen L.J."/>
            <person name="Gnad F."/>
            <person name="Cox J."/>
            <person name="Jensen T.S."/>
            <person name="Nigg E.A."/>
            <person name="Brunak S."/>
            <person name="Mann M."/>
        </authorList>
    </citation>
    <scope>PHOSPHORYLATION [LARGE SCALE ANALYSIS] AT SER-224</scope>
    <scope>IDENTIFICATION BY MASS SPECTROMETRY [LARGE SCALE ANALYSIS]</scope>
    <source>
        <tissue>Cervix carcinoma</tissue>
    </source>
</reference>
<reference key="17">
    <citation type="journal article" date="2011" name="Sci. Signal.">
        <title>System-wide temporal characterization of the proteome and phosphoproteome of human embryonic stem cell differentiation.</title>
        <authorList>
            <person name="Rigbolt K.T."/>
            <person name="Prokhorova T.A."/>
            <person name="Akimov V."/>
            <person name="Henningsen J."/>
            <person name="Johansen P.T."/>
            <person name="Kratchmarova I."/>
            <person name="Kassem M."/>
            <person name="Mann M."/>
            <person name="Olsen J.V."/>
            <person name="Blagoev B."/>
        </authorList>
    </citation>
    <scope>IDENTIFICATION BY MASS SPECTROMETRY [LARGE SCALE ANALYSIS]</scope>
</reference>
<reference key="18">
    <citation type="journal article" date="2013" name="J. Proteome Res.">
        <title>Toward a comprehensive characterization of a human cancer cell phosphoproteome.</title>
        <authorList>
            <person name="Zhou H."/>
            <person name="Di Palma S."/>
            <person name="Preisinger C."/>
            <person name="Peng M."/>
            <person name="Polat A.N."/>
            <person name="Heck A.J."/>
            <person name="Mohammed S."/>
        </authorList>
    </citation>
    <scope>PHOSPHORYLATION [LARGE SCALE ANALYSIS] AT SER-224</scope>
    <scope>IDENTIFICATION BY MASS SPECTROMETRY [LARGE SCALE ANALYSIS]</scope>
    <source>
        <tissue>Cervix carcinoma</tissue>
        <tissue>Erythroleukemia</tissue>
    </source>
</reference>
<reference key="19">
    <citation type="journal article" date="2014" name="J. Proteomics">
        <title>An enzyme assisted RP-RPLC approach for in-depth analysis of human liver phosphoproteome.</title>
        <authorList>
            <person name="Bian Y."/>
            <person name="Song C."/>
            <person name="Cheng K."/>
            <person name="Dong M."/>
            <person name="Wang F."/>
            <person name="Huang J."/>
            <person name="Sun D."/>
            <person name="Wang L."/>
            <person name="Ye M."/>
            <person name="Zou H."/>
        </authorList>
    </citation>
    <scope>PHOSPHORYLATION [LARGE SCALE ANALYSIS] AT SER-224</scope>
    <scope>IDENTIFICATION BY MASS SPECTROMETRY [LARGE SCALE ANALYSIS]</scope>
    <source>
        <tissue>Liver</tissue>
    </source>
</reference>
<reference key="20">
    <citation type="journal article" date="2014" name="Mol. Biol. Cell">
        <title>Olfactomedin 2, a novel regulator for transforming growth factor-beta-induced smooth muscle differentiation of human embryonic stem cell-derived mesenchymal cells.</title>
        <authorList>
            <person name="Shi N."/>
            <person name="Guo X."/>
            <person name="Chen S.Y."/>
        </authorList>
    </citation>
    <scope>INTERACTION WITH OLFM2</scope>
</reference>
<reference key="21">
    <citation type="journal article" date="1995" name="Nature">
        <title>Structure of serum response factor core bound to DNA.</title>
        <authorList>
            <person name="Pellegrini L."/>
            <person name="Tan S."/>
            <person name="Richmond T.J."/>
        </authorList>
    </citation>
    <scope>X-RAY CRYSTALLOGRAPHY (3.2 ANGSTROMS) OF 132-223</scope>
    <scope>SUBUNIT</scope>
</reference>